<name>ADEC_CERS5</name>
<proteinExistence type="inferred from homology"/>
<keyword id="KW-0378">Hydrolase</keyword>
<keyword id="KW-0464">Manganese</keyword>
<gene>
    <name evidence="1" type="primary">ade</name>
    <name type="ordered locus">Rsph17025_0239</name>
</gene>
<organism>
    <name type="scientific">Cereibacter sphaeroides (strain ATCC 17025 / ATH 2.4.3)</name>
    <name type="common">Rhodobacter sphaeroides</name>
    <dbReference type="NCBI Taxonomy" id="349102"/>
    <lineage>
        <taxon>Bacteria</taxon>
        <taxon>Pseudomonadati</taxon>
        <taxon>Pseudomonadota</taxon>
        <taxon>Alphaproteobacteria</taxon>
        <taxon>Rhodobacterales</taxon>
        <taxon>Paracoccaceae</taxon>
        <taxon>Cereibacter</taxon>
    </lineage>
</organism>
<sequence>MRRSLSDLIDQGRGKAPADLVLKNGRIFDLVTGELVQTDVAICGDRIVGTFGTYEGRREIDCRGRILVPGFIDTHLHVESSLVTPFEFDRCVTPRGITTAICDPHEIANVCGLEGIRYFLEAAEHLVMDLRVQLSSCVPSTHMETAGATLEAADLVPLMDHPRVIGLAEFMNFPGVLAKDAGCLAKLEAFRGRHIDGHAPLLRGKDLNGYIAAGIRTEHEATTAEEALEKLRKGMRVLIREGSVSRDLEALVPLLTERHSPYLCLCTDDRNPLDIAEHGHIDHMIRTAIRLGAPPLAVYRAASLSAAEAFGLKDRGLIAPGKRADVVALDSLEGCHAGLVVAGGVVVDAGAFAARGTVEPVARASVRVAPVEAAAFRCPGNRAETPVIGILPGKIITEHLTDAIEPVDGDKRPDPSRDLARIAVIERHGRNGGRAVGFVRGFGMRRGAIASTVCHDHHNLAVVGVDYADMALAANRLREIEGGFAVAAEGEILAELALPVGGLMSLRPFEEVRDALVALREAARGLGVTLEEPFLQLAFLALPVIPHLKITDRGIVDVDRFEILP</sequence>
<comment type="catalytic activity">
    <reaction evidence="1">
        <text>adenine + H2O + H(+) = hypoxanthine + NH4(+)</text>
        <dbReference type="Rhea" id="RHEA:23688"/>
        <dbReference type="ChEBI" id="CHEBI:15377"/>
        <dbReference type="ChEBI" id="CHEBI:15378"/>
        <dbReference type="ChEBI" id="CHEBI:16708"/>
        <dbReference type="ChEBI" id="CHEBI:17368"/>
        <dbReference type="ChEBI" id="CHEBI:28938"/>
        <dbReference type="EC" id="3.5.4.2"/>
    </reaction>
</comment>
<comment type="cofactor">
    <cofactor evidence="1">
        <name>Mn(2+)</name>
        <dbReference type="ChEBI" id="CHEBI:29035"/>
    </cofactor>
</comment>
<comment type="similarity">
    <text evidence="1">Belongs to the metallo-dependent hydrolases superfamily. Adenine deaminase family.</text>
</comment>
<reference key="1">
    <citation type="submission" date="2007-04" db="EMBL/GenBank/DDBJ databases">
        <title>Complete sequence of chromosome of Rhodobacter sphaeroides ATCC 17025.</title>
        <authorList>
            <consortium name="US DOE Joint Genome Institute"/>
            <person name="Copeland A."/>
            <person name="Lucas S."/>
            <person name="Lapidus A."/>
            <person name="Barry K."/>
            <person name="Detter J.C."/>
            <person name="Glavina del Rio T."/>
            <person name="Hammon N."/>
            <person name="Israni S."/>
            <person name="Dalin E."/>
            <person name="Tice H."/>
            <person name="Pitluck S."/>
            <person name="Chertkov O."/>
            <person name="Brettin T."/>
            <person name="Bruce D."/>
            <person name="Han C."/>
            <person name="Schmutz J."/>
            <person name="Larimer F."/>
            <person name="Land M."/>
            <person name="Hauser L."/>
            <person name="Kyrpides N."/>
            <person name="Kim E."/>
            <person name="Richardson P."/>
            <person name="Mackenzie C."/>
            <person name="Choudhary M."/>
            <person name="Donohue T.J."/>
            <person name="Kaplan S."/>
        </authorList>
    </citation>
    <scope>NUCLEOTIDE SEQUENCE [LARGE SCALE GENOMIC DNA]</scope>
    <source>
        <strain>ATCC 17025 / ATH 2.4.3</strain>
    </source>
</reference>
<accession>A4WP35</accession>
<dbReference type="EC" id="3.5.4.2" evidence="1"/>
<dbReference type="EMBL" id="CP000661">
    <property type="protein sequence ID" value="ABP69149.1"/>
    <property type="molecule type" value="Genomic_DNA"/>
</dbReference>
<dbReference type="SMR" id="A4WP35"/>
<dbReference type="STRING" id="349102.Rsph17025_0239"/>
<dbReference type="KEGG" id="rsq:Rsph17025_0239"/>
<dbReference type="eggNOG" id="COG1001">
    <property type="taxonomic scope" value="Bacteria"/>
</dbReference>
<dbReference type="HOGENOM" id="CLU_027935_0_0_5"/>
<dbReference type="BioCyc" id="RSPH349102:G1G8M-245-MONOMER"/>
<dbReference type="GO" id="GO:0000034">
    <property type="term" value="F:adenine deaminase activity"/>
    <property type="evidence" value="ECO:0007669"/>
    <property type="project" value="UniProtKB-UniRule"/>
</dbReference>
<dbReference type="GO" id="GO:0006146">
    <property type="term" value="P:adenine catabolic process"/>
    <property type="evidence" value="ECO:0007669"/>
    <property type="project" value="InterPro"/>
</dbReference>
<dbReference type="CDD" id="cd01295">
    <property type="entry name" value="AdeC"/>
    <property type="match status" value="1"/>
</dbReference>
<dbReference type="Gene3D" id="3.20.20.140">
    <property type="entry name" value="Metal-dependent hydrolases"/>
    <property type="match status" value="1"/>
</dbReference>
<dbReference type="Gene3D" id="2.30.40.10">
    <property type="entry name" value="Urease, subunit C, domain 1"/>
    <property type="match status" value="1"/>
</dbReference>
<dbReference type="HAMAP" id="MF_01518">
    <property type="entry name" value="Adenine_deamin"/>
    <property type="match status" value="1"/>
</dbReference>
<dbReference type="InterPro" id="IPR006679">
    <property type="entry name" value="Adenine_deam"/>
</dbReference>
<dbReference type="InterPro" id="IPR026912">
    <property type="entry name" value="Adenine_deam_C"/>
</dbReference>
<dbReference type="InterPro" id="IPR006680">
    <property type="entry name" value="Amidohydro-rel"/>
</dbReference>
<dbReference type="InterPro" id="IPR011059">
    <property type="entry name" value="Metal-dep_hydrolase_composite"/>
</dbReference>
<dbReference type="InterPro" id="IPR032466">
    <property type="entry name" value="Metal_Hydrolase"/>
</dbReference>
<dbReference type="NCBIfam" id="TIGR01178">
    <property type="entry name" value="ade"/>
    <property type="match status" value="1"/>
</dbReference>
<dbReference type="PANTHER" id="PTHR11113:SF2">
    <property type="entry name" value="ADENINE DEAMINASE"/>
    <property type="match status" value="1"/>
</dbReference>
<dbReference type="PANTHER" id="PTHR11113">
    <property type="entry name" value="N-ACETYLGLUCOSAMINE-6-PHOSPHATE DEACETYLASE"/>
    <property type="match status" value="1"/>
</dbReference>
<dbReference type="Pfam" id="PF13382">
    <property type="entry name" value="Adenine_deam_C"/>
    <property type="match status" value="1"/>
</dbReference>
<dbReference type="Pfam" id="PF01979">
    <property type="entry name" value="Amidohydro_1"/>
    <property type="match status" value="1"/>
</dbReference>
<dbReference type="SUPFAM" id="SSF51338">
    <property type="entry name" value="Composite domain of metallo-dependent hydrolases"/>
    <property type="match status" value="1"/>
</dbReference>
<dbReference type="SUPFAM" id="SSF51556">
    <property type="entry name" value="Metallo-dependent hydrolases"/>
    <property type="match status" value="1"/>
</dbReference>
<feature type="chain" id="PRO_1000068612" description="Adenine deaminase">
    <location>
        <begin position="1"/>
        <end position="565"/>
    </location>
</feature>
<protein>
    <recommendedName>
        <fullName evidence="1">Adenine deaminase</fullName>
        <shortName evidence="1">Adenase</shortName>
        <shortName evidence="1">Adenine aminase</shortName>
        <ecNumber evidence="1">3.5.4.2</ecNumber>
    </recommendedName>
</protein>
<evidence type="ECO:0000255" key="1">
    <source>
        <dbReference type="HAMAP-Rule" id="MF_01518"/>
    </source>
</evidence>